<name>Y413_PHOV8</name>
<evidence type="ECO:0000255" key="1">
    <source>
        <dbReference type="HAMAP-Rule" id="MF_00652"/>
    </source>
</evidence>
<dbReference type="EMBL" id="CP000139">
    <property type="protein sequence ID" value="ABR38128.1"/>
    <property type="molecule type" value="Genomic_DNA"/>
</dbReference>
<dbReference type="SMR" id="A6KXG4"/>
<dbReference type="STRING" id="435590.BVU_0413"/>
<dbReference type="PaxDb" id="435590-BVU_0413"/>
<dbReference type="GeneID" id="5301382"/>
<dbReference type="KEGG" id="bvu:BVU_0413"/>
<dbReference type="eggNOG" id="COG3022">
    <property type="taxonomic scope" value="Bacteria"/>
</dbReference>
<dbReference type="HOGENOM" id="CLU_061989_0_1_10"/>
<dbReference type="BioCyc" id="BVUL435590:G1G59-433-MONOMER"/>
<dbReference type="Proteomes" id="UP000002861">
    <property type="component" value="Chromosome"/>
</dbReference>
<dbReference type="GO" id="GO:0005829">
    <property type="term" value="C:cytosol"/>
    <property type="evidence" value="ECO:0007669"/>
    <property type="project" value="TreeGrafter"/>
</dbReference>
<dbReference type="GO" id="GO:0033194">
    <property type="term" value="P:response to hydroperoxide"/>
    <property type="evidence" value="ECO:0007669"/>
    <property type="project" value="TreeGrafter"/>
</dbReference>
<dbReference type="HAMAP" id="MF_00652">
    <property type="entry name" value="UPF0246"/>
    <property type="match status" value="1"/>
</dbReference>
<dbReference type="InterPro" id="IPR005583">
    <property type="entry name" value="YaaA"/>
</dbReference>
<dbReference type="NCBIfam" id="NF002547">
    <property type="entry name" value="PRK02101.2-5"/>
    <property type="match status" value="1"/>
</dbReference>
<dbReference type="PANTHER" id="PTHR30283:SF4">
    <property type="entry name" value="PEROXIDE STRESS RESISTANCE PROTEIN YAAA"/>
    <property type="match status" value="1"/>
</dbReference>
<dbReference type="PANTHER" id="PTHR30283">
    <property type="entry name" value="PEROXIDE STRESS RESPONSE PROTEIN YAAA"/>
    <property type="match status" value="1"/>
</dbReference>
<dbReference type="Pfam" id="PF03883">
    <property type="entry name" value="H2O2_YaaD"/>
    <property type="match status" value="1"/>
</dbReference>
<comment type="similarity">
    <text evidence="1">Belongs to the UPF0246 family.</text>
</comment>
<protein>
    <recommendedName>
        <fullName evidence="1">UPF0246 protein BVU_0413</fullName>
    </recommendedName>
</protein>
<proteinExistence type="inferred from homology"/>
<sequence>MMTFISCAKTMTGRSKMQTPVTSTPQFQTEAIQNALDMSQFSAEELERLLRVNSKIAAENYMRFQDFCSDSPSALAALLAYTGIVYKRIHPQDFTPEDFQYAQDHLRITSFLYGLLRPLDQIKNYRMEGDIKLPERGGISMFDYWKPILTDTFIKEIKARGGILINLASGEMKDLFDWKRVEQEVQVITPEFQVWKKGKLTTVVVYAKMCRGELTRFIIKNRIENPGDLKGFKWEGFSFDAGHSTDTHYLFSLLS</sequence>
<gene>
    <name type="ordered locus">BVU_0413</name>
</gene>
<reference key="1">
    <citation type="journal article" date="2007" name="PLoS Biol.">
        <title>Evolution of symbiotic bacteria in the distal human intestine.</title>
        <authorList>
            <person name="Xu J."/>
            <person name="Mahowald M.A."/>
            <person name="Ley R.E."/>
            <person name="Lozupone C.A."/>
            <person name="Hamady M."/>
            <person name="Martens E.C."/>
            <person name="Henrissat B."/>
            <person name="Coutinho P.M."/>
            <person name="Minx P."/>
            <person name="Latreille P."/>
            <person name="Cordum H."/>
            <person name="Van Brunt A."/>
            <person name="Kim K."/>
            <person name="Fulton R.S."/>
            <person name="Fulton L.A."/>
            <person name="Clifton S.W."/>
            <person name="Wilson R.K."/>
            <person name="Knight R.D."/>
            <person name="Gordon J.I."/>
        </authorList>
    </citation>
    <scope>NUCLEOTIDE SEQUENCE [LARGE SCALE GENOMIC DNA]</scope>
    <source>
        <strain>ATCC 8482 / DSM 1447 / JCM 5826 / CCUG 4940 / NBRC 14291 / NCTC 11154</strain>
    </source>
</reference>
<accession>A6KXG4</accession>
<organism>
    <name type="scientific">Phocaeicola vulgatus (strain ATCC 8482 / DSM 1447 / JCM 5826 / CCUG 4940 / NBRC 14291 / NCTC 11154)</name>
    <name type="common">Bacteroides vulgatus</name>
    <dbReference type="NCBI Taxonomy" id="435590"/>
    <lineage>
        <taxon>Bacteria</taxon>
        <taxon>Pseudomonadati</taxon>
        <taxon>Bacteroidota</taxon>
        <taxon>Bacteroidia</taxon>
        <taxon>Bacteroidales</taxon>
        <taxon>Bacteroidaceae</taxon>
        <taxon>Phocaeicola</taxon>
    </lineage>
</organism>
<feature type="chain" id="PRO_1000061586" description="UPF0246 protein BVU_0413">
    <location>
        <begin position="1"/>
        <end position="255"/>
    </location>
</feature>